<sequence>MASSGGGNTGAGGTSGLGLGLGLGLCMGEATGDAEEEAAAAEAVGRLATSLWLRLRGWEAVLAAAQRLLVWEKPLHSLVTAATLNGLFWLLSSSSLRPFFLLSISLLTYFLLDLWHPRFLPDVSAPPPEEPHSDSEGAGSGAQPHLLSVPELCRYLAESWLTFQIHLQELLQYKRQNPAQFCARVCSGCAVLAVLGHYVPGIMISYIVLLSILLWPLVVYHELIQRMYTRLEPLLMQLDYSMKAEADALHHKHDKRKRQGKNAPPAGDEPLAETESESEAELAGFSPVVDVKKTALALAITDSELSDEEASILESGGFSVSRATTPQLTDVSEDLDQQSLPSEPEEALSRELGDGEETELAPPEDLLSAPPALSKQALDTEEEGAADKETLLQLSSPLHFVNTHFNGAGSPQEGVKCPPGGPVETLSPEAVSGDLMAPSSTLSPQLCLAESGPVTLLSPSVLPSLPQDSPQALTAPEEEEALTTEDFELLDQGELEQLNAELGLGPEMPPKPPDVLPPPPLGPDSHSLVQSDQEAHAVVEP</sequence>
<feature type="chain" id="PRO_0000288464" description="Reticulophagy regulator 2">
    <location>
        <begin position="1"/>
        <end position="541"/>
    </location>
</feature>
<feature type="transmembrane region" description="Helical" evidence="4">
    <location>
        <begin position="75"/>
        <end position="91"/>
    </location>
</feature>
<feature type="transmembrane region" description="Helical" evidence="4">
    <location>
        <begin position="99"/>
        <end position="115"/>
    </location>
</feature>
<feature type="transmembrane region" description="Helical" evidence="4">
    <location>
        <begin position="199"/>
        <end position="219"/>
    </location>
</feature>
<feature type="region of interest" description="Disordered" evidence="5">
    <location>
        <begin position="249"/>
        <end position="282"/>
    </location>
</feature>
<feature type="region of interest" description="Disordered" evidence="5">
    <location>
        <begin position="331"/>
        <end position="389"/>
    </location>
</feature>
<feature type="region of interest" description="Disordered" evidence="5">
    <location>
        <begin position="403"/>
        <end position="440"/>
    </location>
</feature>
<feature type="region of interest" description="Disordered" evidence="5">
    <location>
        <begin position="459"/>
        <end position="481"/>
    </location>
</feature>
<feature type="region of interest" description="Disordered" evidence="5">
    <location>
        <begin position="496"/>
        <end position="541"/>
    </location>
</feature>
<feature type="short sequence motif" description="LIR motif" evidence="3">
    <location>
        <begin position="485"/>
        <end position="490"/>
    </location>
</feature>
<feature type="compositionally biased region" description="Basic residues" evidence="5">
    <location>
        <begin position="250"/>
        <end position="260"/>
    </location>
</feature>
<feature type="compositionally biased region" description="Acidic residues" evidence="5">
    <location>
        <begin position="270"/>
        <end position="280"/>
    </location>
</feature>
<feature type="compositionally biased region" description="Low complexity" evidence="5">
    <location>
        <begin position="459"/>
        <end position="475"/>
    </location>
</feature>
<feature type="compositionally biased region" description="Pro residues" evidence="5">
    <location>
        <begin position="507"/>
        <end position="522"/>
    </location>
</feature>
<feature type="modified residue" description="Phosphothreonine" evidence="7">
    <location>
        <position position="274"/>
    </location>
</feature>
<feature type="modified residue" description="Phosphoserine" evidence="2">
    <location>
        <position position="276"/>
    </location>
</feature>
<feature type="modified residue" description="Phosphoserine" evidence="2">
    <location>
        <position position="278"/>
    </location>
</feature>
<feature type="modified residue" description="Phosphoserine" evidence="2">
    <location>
        <position position="286"/>
    </location>
</feature>
<feature type="modified residue" description="Phosphoserine" evidence="2">
    <location>
        <position position="306"/>
    </location>
</feature>
<feature type="modified residue" description="Phosphothreonine" evidence="1">
    <location>
        <position position="329"/>
    </location>
</feature>
<feature type="modified residue" description="Phosphoserine" evidence="1">
    <location>
        <position position="332"/>
    </location>
</feature>
<feature type="modified residue" description="Phosphoserine" evidence="7">
    <location>
        <position position="339"/>
    </location>
</feature>
<feature type="modified residue" description="Phosphoserine" evidence="7">
    <location>
        <position position="342"/>
    </location>
</feature>
<name>RETR2_RAT</name>
<accession>Q3MHU5</accession>
<dbReference type="EMBL" id="AABR03068044">
    <property type="status" value="NOT_ANNOTATED_CDS"/>
    <property type="molecule type" value="Genomic_DNA"/>
</dbReference>
<dbReference type="EMBL" id="BC104673">
    <property type="protein sequence ID" value="AAI04674.1"/>
    <property type="molecule type" value="mRNA"/>
</dbReference>
<dbReference type="RefSeq" id="NP_001094230.1">
    <property type="nucleotide sequence ID" value="NM_001100760.1"/>
</dbReference>
<dbReference type="FunCoup" id="Q3MHU5">
    <property type="interactions" value="2271"/>
</dbReference>
<dbReference type="STRING" id="10116.ENSRNOP00000054145"/>
<dbReference type="GlyGen" id="Q3MHU5">
    <property type="glycosylation" value="1 site"/>
</dbReference>
<dbReference type="iPTMnet" id="Q3MHU5"/>
<dbReference type="PhosphoSitePlus" id="Q3MHU5"/>
<dbReference type="jPOST" id="Q3MHU5"/>
<dbReference type="PaxDb" id="10116-ENSRNOP00000054145"/>
<dbReference type="GeneID" id="363252"/>
<dbReference type="KEGG" id="rno:363252"/>
<dbReference type="UCSC" id="RGD:1306844">
    <property type="organism name" value="rat"/>
</dbReference>
<dbReference type="AGR" id="RGD:1306844"/>
<dbReference type="CTD" id="79137"/>
<dbReference type="RGD" id="1306844">
    <property type="gene designation" value="Retreg2"/>
</dbReference>
<dbReference type="VEuPathDB" id="HostDB:ENSRNOG00000018586"/>
<dbReference type="eggNOG" id="ENOG502QPTN">
    <property type="taxonomic scope" value="Eukaryota"/>
</dbReference>
<dbReference type="InParanoid" id="Q3MHU5"/>
<dbReference type="OrthoDB" id="10029527at2759"/>
<dbReference type="PhylomeDB" id="Q3MHU5"/>
<dbReference type="TreeFam" id="TF329111"/>
<dbReference type="PRO" id="PR:Q3MHU5"/>
<dbReference type="Proteomes" id="UP000002494">
    <property type="component" value="Chromosome 9"/>
</dbReference>
<dbReference type="Bgee" id="ENSRNOG00000018586">
    <property type="expression patterns" value="Expressed in frontal cortex and 19 other cell types or tissues"/>
</dbReference>
<dbReference type="ExpressionAtlas" id="Q3MHU5">
    <property type="expression patterns" value="baseline and differential"/>
</dbReference>
<dbReference type="GO" id="GO:0005783">
    <property type="term" value="C:endoplasmic reticulum"/>
    <property type="evidence" value="ECO:0000266"/>
    <property type="project" value="RGD"/>
</dbReference>
<dbReference type="GO" id="GO:0005789">
    <property type="term" value="C:endoplasmic reticulum membrane"/>
    <property type="evidence" value="ECO:0007669"/>
    <property type="project" value="UniProtKB-SubCell"/>
</dbReference>
<dbReference type="GO" id="GO:0016020">
    <property type="term" value="C:membrane"/>
    <property type="evidence" value="ECO:0000318"/>
    <property type="project" value="GO_Central"/>
</dbReference>
<dbReference type="GO" id="GO:0140506">
    <property type="term" value="F:endoplasmic reticulum-autophagosome adaptor activity"/>
    <property type="evidence" value="ECO:0000266"/>
    <property type="project" value="RGD"/>
</dbReference>
<dbReference type="GO" id="GO:0030574">
    <property type="term" value="P:collagen catabolic process"/>
    <property type="evidence" value="ECO:0000266"/>
    <property type="project" value="RGD"/>
</dbReference>
<dbReference type="GO" id="GO:0007029">
    <property type="term" value="P:endoplasmic reticulum organization"/>
    <property type="evidence" value="ECO:0000266"/>
    <property type="project" value="RGD"/>
</dbReference>
<dbReference type="GO" id="GO:0061709">
    <property type="term" value="P:reticulophagy"/>
    <property type="evidence" value="ECO:0000266"/>
    <property type="project" value="RGD"/>
</dbReference>
<dbReference type="CDD" id="cd22561">
    <property type="entry name" value="RETR2_RHD"/>
    <property type="match status" value="1"/>
</dbReference>
<dbReference type="InterPro" id="IPR052114">
    <property type="entry name" value="ER_autophagy_membrane_reg"/>
</dbReference>
<dbReference type="InterPro" id="IPR055257">
    <property type="entry name" value="RETR2_RHD"/>
</dbReference>
<dbReference type="PANTHER" id="PTHR20952">
    <property type="entry name" value="ADP-RIBOSYLATION-LIKE FACTOR 6-INTERACTING PROTEIN"/>
    <property type="match status" value="1"/>
</dbReference>
<dbReference type="PANTHER" id="PTHR20952:SF4">
    <property type="entry name" value="RETICULOPHAGY REGULATOR 2"/>
    <property type="match status" value="1"/>
</dbReference>
<dbReference type="Pfam" id="PF24456">
    <property type="entry name" value="RHD_RETREG1-3"/>
    <property type="match status" value="1"/>
</dbReference>
<gene>
    <name type="primary">Retreg2</name>
    <name type="synonym">Fam134a</name>
</gene>
<proteinExistence type="evidence at protein level"/>
<protein>
    <recommendedName>
        <fullName>Reticulophagy regulator 2</fullName>
    </recommendedName>
</protein>
<reference key="1">
    <citation type="journal article" date="2004" name="Nature">
        <title>Genome sequence of the Brown Norway rat yields insights into mammalian evolution.</title>
        <authorList>
            <person name="Gibbs R.A."/>
            <person name="Weinstock G.M."/>
            <person name="Metzker M.L."/>
            <person name="Muzny D.M."/>
            <person name="Sodergren E.J."/>
            <person name="Scherer S."/>
            <person name="Scott G."/>
            <person name="Steffen D."/>
            <person name="Worley K.C."/>
            <person name="Burch P.E."/>
            <person name="Okwuonu G."/>
            <person name="Hines S."/>
            <person name="Lewis L."/>
            <person name="Deramo C."/>
            <person name="Delgado O."/>
            <person name="Dugan-Rocha S."/>
            <person name="Miner G."/>
            <person name="Morgan M."/>
            <person name="Hawes A."/>
            <person name="Gill R."/>
            <person name="Holt R.A."/>
            <person name="Adams M.D."/>
            <person name="Amanatides P.G."/>
            <person name="Baden-Tillson H."/>
            <person name="Barnstead M."/>
            <person name="Chin S."/>
            <person name="Evans C.A."/>
            <person name="Ferriera S."/>
            <person name="Fosler C."/>
            <person name="Glodek A."/>
            <person name="Gu Z."/>
            <person name="Jennings D."/>
            <person name="Kraft C.L."/>
            <person name="Nguyen T."/>
            <person name="Pfannkoch C.M."/>
            <person name="Sitter C."/>
            <person name="Sutton G.G."/>
            <person name="Venter J.C."/>
            <person name="Woodage T."/>
            <person name="Smith D."/>
            <person name="Lee H.-M."/>
            <person name="Gustafson E."/>
            <person name="Cahill P."/>
            <person name="Kana A."/>
            <person name="Doucette-Stamm L."/>
            <person name="Weinstock K."/>
            <person name="Fechtel K."/>
            <person name="Weiss R.B."/>
            <person name="Dunn D.M."/>
            <person name="Green E.D."/>
            <person name="Blakesley R.W."/>
            <person name="Bouffard G.G."/>
            <person name="De Jong P.J."/>
            <person name="Osoegawa K."/>
            <person name="Zhu B."/>
            <person name="Marra M."/>
            <person name="Schein J."/>
            <person name="Bosdet I."/>
            <person name="Fjell C."/>
            <person name="Jones S."/>
            <person name="Krzywinski M."/>
            <person name="Mathewson C."/>
            <person name="Siddiqui A."/>
            <person name="Wye N."/>
            <person name="McPherson J."/>
            <person name="Zhao S."/>
            <person name="Fraser C.M."/>
            <person name="Shetty J."/>
            <person name="Shatsman S."/>
            <person name="Geer K."/>
            <person name="Chen Y."/>
            <person name="Abramzon S."/>
            <person name="Nierman W.C."/>
            <person name="Havlak P.H."/>
            <person name="Chen R."/>
            <person name="Durbin K.J."/>
            <person name="Egan A."/>
            <person name="Ren Y."/>
            <person name="Song X.-Z."/>
            <person name="Li B."/>
            <person name="Liu Y."/>
            <person name="Qin X."/>
            <person name="Cawley S."/>
            <person name="Cooney A.J."/>
            <person name="D'Souza L.M."/>
            <person name="Martin K."/>
            <person name="Wu J.Q."/>
            <person name="Gonzalez-Garay M.L."/>
            <person name="Jackson A.R."/>
            <person name="Kalafus K.J."/>
            <person name="McLeod M.P."/>
            <person name="Milosavljevic A."/>
            <person name="Virk D."/>
            <person name="Volkov A."/>
            <person name="Wheeler D.A."/>
            <person name="Zhang Z."/>
            <person name="Bailey J.A."/>
            <person name="Eichler E.E."/>
            <person name="Tuzun E."/>
            <person name="Birney E."/>
            <person name="Mongin E."/>
            <person name="Ureta-Vidal A."/>
            <person name="Woodwark C."/>
            <person name="Zdobnov E."/>
            <person name="Bork P."/>
            <person name="Suyama M."/>
            <person name="Torrents D."/>
            <person name="Alexandersson M."/>
            <person name="Trask B.J."/>
            <person name="Young J.M."/>
            <person name="Huang H."/>
            <person name="Wang H."/>
            <person name="Xing H."/>
            <person name="Daniels S."/>
            <person name="Gietzen D."/>
            <person name="Schmidt J."/>
            <person name="Stevens K."/>
            <person name="Vitt U."/>
            <person name="Wingrove J."/>
            <person name="Camara F."/>
            <person name="Mar Alba M."/>
            <person name="Abril J.F."/>
            <person name="Guigo R."/>
            <person name="Smit A."/>
            <person name="Dubchak I."/>
            <person name="Rubin E.M."/>
            <person name="Couronne O."/>
            <person name="Poliakov A."/>
            <person name="Huebner N."/>
            <person name="Ganten D."/>
            <person name="Goesele C."/>
            <person name="Hummel O."/>
            <person name="Kreitler T."/>
            <person name="Lee Y.-A."/>
            <person name="Monti J."/>
            <person name="Schulz H."/>
            <person name="Zimdahl H."/>
            <person name="Himmelbauer H."/>
            <person name="Lehrach H."/>
            <person name="Jacob H.J."/>
            <person name="Bromberg S."/>
            <person name="Gullings-Handley J."/>
            <person name="Jensen-Seaman M.I."/>
            <person name="Kwitek A.E."/>
            <person name="Lazar J."/>
            <person name="Pasko D."/>
            <person name="Tonellato P.J."/>
            <person name="Twigger S."/>
            <person name="Ponting C.P."/>
            <person name="Duarte J.M."/>
            <person name="Rice S."/>
            <person name="Goodstadt L."/>
            <person name="Beatson S.A."/>
            <person name="Emes R.D."/>
            <person name="Winter E.E."/>
            <person name="Webber C."/>
            <person name="Brandt P."/>
            <person name="Nyakatura G."/>
            <person name="Adetobi M."/>
            <person name="Chiaromonte F."/>
            <person name="Elnitski L."/>
            <person name="Eswara P."/>
            <person name="Hardison R.C."/>
            <person name="Hou M."/>
            <person name="Kolbe D."/>
            <person name="Makova K."/>
            <person name="Miller W."/>
            <person name="Nekrutenko A."/>
            <person name="Riemer C."/>
            <person name="Schwartz S."/>
            <person name="Taylor J."/>
            <person name="Yang S."/>
            <person name="Zhang Y."/>
            <person name="Lindpaintner K."/>
            <person name="Andrews T.D."/>
            <person name="Caccamo M."/>
            <person name="Clamp M."/>
            <person name="Clarke L."/>
            <person name="Curwen V."/>
            <person name="Durbin R.M."/>
            <person name="Eyras E."/>
            <person name="Searle S.M."/>
            <person name="Cooper G.M."/>
            <person name="Batzoglou S."/>
            <person name="Brudno M."/>
            <person name="Sidow A."/>
            <person name="Stone E.A."/>
            <person name="Payseur B.A."/>
            <person name="Bourque G."/>
            <person name="Lopez-Otin C."/>
            <person name="Puente X.S."/>
            <person name="Chakrabarti K."/>
            <person name="Chatterji S."/>
            <person name="Dewey C."/>
            <person name="Pachter L."/>
            <person name="Bray N."/>
            <person name="Yap V.B."/>
            <person name="Caspi A."/>
            <person name="Tesler G."/>
            <person name="Pevzner P.A."/>
            <person name="Haussler D."/>
            <person name="Roskin K.M."/>
            <person name="Baertsch R."/>
            <person name="Clawson H."/>
            <person name="Furey T.S."/>
            <person name="Hinrichs A.S."/>
            <person name="Karolchik D."/>
            <person name="Kent W.J."/>
            <person name="Rosenbloom K.R."/>
            <person name="Trumbower H."/>
            <person name="Weirauch M."/>
            <person name="Cooper D.N."/>
            <person name="Stenson P.D."/>
            <person name="Ma B."/>
            <person name="Brent M."/>
            <person name="Arumugam M."/>
            <person name="Shteynberg D."/>
            <person name="Copley R.R."/>
            <person name="Taylor M.S."/>
            <person name="Riethman H."/>
            <person name="Mudunuri U."/>
            <person name="Peterson J."/>
            <person name="Guyer M."/>
            <person name="Felsenfeld A."/>
            <person name="Old S."/>
            <person name="Mockrin S."/>
            <person name="Collins F.S."/>
        </authorList>
    </citation>
    <scope>NUCLEOTIDE SEQUENCE [LARGE SCALE GENOMIC DNA]</scope>
    <source>
        <strain>Brown Norway</strain>
    </source>
</reference>
<reference key="2">
    <citation type="journal article" date="2004" name="Genome Res.">
        <title>The status, quality, and expansion of the NIH full-length cDNA project: the Mammalian Gene Collection (MGC).</title>
        <authorList>
            <consortium name="The MGC Project Team"/>
        </authorList>
    </citation>
    <scope>NUCLEOTIDE SEQUENCE [LARGE SCALE MRNA] OF 41-541</scope>
    <source>
        <tissue>Testis</tissue>
    </source>
</reference>
<reference key="3">
    <citation type="journal article" date="2012" name="Nat. Commun.">
        <title>Quantitative maps of protein phosphorylation sites across 14 different rat organs and tissues.</title>
        <authorList>
            <person name="Lundby A."/>
            <person name="Secher A."/>
            <person name="Lage K."/>
            <person name="Nordsborg N.B."/>
            <person name="Dmytriyev A."/>
            <person name="Lundby C."/>
            <person name="Olsen J.V."/>
        </authorList>
    </citation>
    <scope>PHOSPHORYLATION [LARGE SCALE ANALYSIS] AT THR-274; SER-339 AND SER-342</scope>
    <scope>IDENTIFICATION BY MASS SPECTROMETRY [LARGE SCALE ANALYSIS]</scope>
</reference>
<organism>
    <name type="scientific">Rattus norvegicus</name>
    <name type="common">Rat</name>
    <dbReference type="NCBI Taxonomy" id="10116"/>
    <lineage>
        <taxon>Eukaryota</taxon>
        <taxon>Metazoa</taxon>
        <taxon>Chordata</taxon>
        <taxon>Craniata</taxon>
        <taxon>Vertebrata</taxon>
        <taxon>Euteleostomi</taxon>
        <taxon>Mammalia</taxon>
        <taxon>Eutheria</taxon>
        <taxon>Euarchontoglires</taxon>
        <taxon>Glires</taxon>
        <taxon>Rodentia</taxon>
        <taxon>Myomorpha</taxon>
        <taxon>Muroidea</taxon>
        <taxon>Muridae</taxon>
        <taxon>Murinae</taxon>
        <taxon>Rattus</taxon>
    </lineage>
</organism>
<comment type="function">
    <text evidence="1 2">Endoplasmic reticulum (ER)-anchored autophagy regulator which exists in an inactive state under basal conditions but is activated following cellular stress. When activated, induces ER fragmentation and mediates ER delivery into lysosomes through sequestration into autophagosomes via interaction with ATG8 family proteins. Required for collagen quality control in a LIR motif-independent manner.</text>
</comment>
<comment type="subunit">
    <text evidence="2">Interacts with ATG8 family modifier proteins MAP1LC3A, MAP1LC3B, GABARAP, GABARAPL1 and GABARAPL2. Interacts with CANX.</text>
</comment>
<comment type="subcellular location">
    <subcellularLocation>
        <location evidence="2">Endoplasmic reticulum membrane</location>
        <topology evidence="4">Multi-pass membrane protein</topology>
    </subcellularLocation>
</comment>
<comment type="domain">
    <text evidence="2">The LIR motif interacts with ATG8 family proteins.</text>
</comment>
<comment type="similarity">
    <text evidence="6">Belongs to the RETREG family.</text>
</comment>
<evidence type="ECO:0000250" key="1">
    <source>
        <dbReference type="UniProtKB" id="Q6NS82"/>
    </source>
</evidence>
<evidence type="ECO:0000250" key="2">
    <source>
        <dbReference type="UniProtKB" id="Q8NC44"/>
    </source>
</evidence>
<evidence type="ECO:0000250" key="3">
    <source>
        <dbReference type="UniProtKB" id="Q9H6L5"/>
    </source>
</evidence>
<evidence type="ECO:0000255" key="4"/>
<evidence type="ECO:0000256" key="5">
    <source>
        <dbReference type="SAM" id="MobiDB-lite"/>
    </source>
</evidence>
<evidence type="ECO:0000305" key="6"/>
<evidence type="ECO:0007744" key="7">
    <source>
    </source>
</evidence>
<keyword id="KW-0072">Autophagy</keyword>
<keyword id="KW-0256">Endoplasmic reticulum</keyword>
<keyword id="KW-0472">Membrane</keyword>
<keyword id="KW-0597">Phosphoprotein</keyword>
<keyword id="KW-1185">Reference proteome</keyword>
<keyword id="KW-0812">Transmembrane</keyword>
<keyword id="KW-1133">Transmembrane helix</keyword>